<name>NDHH_PROM1</name>
<accession>A2C001</accession>
<reference key="1">
    <citation type="journal article" date="2007" name="PLoS Genet.">
        <title>Patterns and implications of gene gain and loss in the evolution of Prochlorococcus.</title>
        <authorList>
            <person name="Kettler G.C."/>
            <person name="Martiny A.C."/>
            <person name="Huang K."/>
            <person name="Zucker J."/>
            <person name="Coleman M.L."/>
            <person name="Rodrigue S."/>
            <person name="Chen F."/>
            <person name="Lapidus A."/>
            <person name="Ferriera S."/>
            <person name="Johnson J."/>
            <person name="Steglich C."/>
            <person name="Church G.M."/>
            <person name="Richardson P."/>
            <person name="Chisholm S.W."/>
        </authorList>
    </citation>
    <scope>NUCLEOTIDE SEQUENCE [LARGE SCALE GENOMIC DNA]</scope>
    <source>
        <strain>NATL1A</strain>
    </source>
</reference>
<gene>
    <name evidence="1" type="primary">ndhH</name>
    <name type="ordered locus">NATL1_02471</name>
</gene>
<proteinExistence type="inferred from homology"/>
<feature type="chain" id="PRO_0000371914" description="NAD(P)H-quinone oxidoreductase subunit H">
    <location>
        <begin position="1"/>
        <end position="394"/>
    </location>
</feature>
<dbReference type="EC" id="7.1.1.-" evidence="1"/>
<dbReference type="EMBL" id="CP000553">
    <property type="protein sequence ID" value="ABM74811.1"/>
    <property type="molecule type" value="Genomic_DNA"/>
</dbReference>
<dbReference type="RefSeq" id="WP_011823031.1">
    <property type="nucleotide sequence ID" value="NC_008819.1"/>
</dbReference>
<dbReference type="SMR" id="A2C001"/>
<dbReference type="KEGG" id="pme:NATL1_02471"/>
<dbReference type="eggNOG" id="COG0649">
    <property type="taxonomic scope" value="Bacteria"/>
</dbReference>
<dbReference type="HOGENOM" id="CLU_015134_1_2_3"/>
<dbReference type="Proteomes" id="UP000002592">
    <property type="component" value="Chromosome"/>
</dbReference>
<dbReference type="GO" id="GO:0031676">
    <property type="term" value="C:plasma membrane-derived thylakoid membrane"/>
    <property type="evidence" value="ECO:0007669"/>
    <property type="project" value="UniProtKB-SubCell"/>
</dbReference>
<dbReference type="GO" id="GO:0051287">
    <property type="term" value="F:NAD binding"/>
    <property type="evidence" value="ECO:0007669"/>
    <property type="project" value="InterPro"/>
</dbReference>
<dbReference type="GO" id="GO:0016655">
    <property type="term" value="F:oxidoreductase activity, acting on NAD(P)H, quinone or similar compound as acceptor"/>
    <property type="evidence" value="ECO:0007669"/>
    <property type="project" value="UniProtKB-UniRule"/>
</dbReference>
<dbReference type="GO" id="GO:0048038">
    <property type="term" value="F:quinone binding"/>
    <property type="evidence" value="ECO:0007669"/>
    <property type="project" value="UniProtKB-KW"/>
</dbReference>
<dbReference type="GO" id="GO:0019684">
    <property type="term" value="P:photosynthesis, light reaction"/>
    <property type="evidence" value="ECO:0007669"/>
    <property type="project" value="UniProtKB-UniRule"/>
</dbReference>
<dbReference type="Gene3D" id="1.10.645.10">
    <property type="entry name" value="Cytochrome-c3 Hydrogenase, chain B"/>
    <property type="match status" value="1"/>
</dbReference>
<dbReference type="HAMAP" id="MF_01358">
    <property type="entry name" value="NDH1_NuoD"/>
    <property type="match status" value="1"/>
</dbReference>
<dbReference type="InterPro" id="IPR001135">
    <property type="entry name" value="NADH_Q_OxRdtase_suD"/>
</dbReference>
<dbReference type="InterPro" id="IPR014029">
    <property type="entry name" value="NADH_UbQ_OxRdtase_49kDa_CS"/>
</dbReference>
<dbReference type="InterPro" id="IPR022885">
    <property type="entry name" value="NDH1_su_D/H"/>
</dbReference>
<dbReference type="InterPro" id="IPR029014">
    <property type="entry name" value="NiFe-Hase_large"/>
</dbReference>
<dbReference type="NCBIfam" id="NF004739">
    <property type="entry name" value="PRK06075.1"/>
    <property type="match status" value="1"/>
</dbReference>
<dbReference type="NCBIfam" id="NF005649">
    <property type="entry name" value="PRK07415.1"/>
    <property type="match status" value="1"/>
</dbReference>
<dbReference type="PANTHER" id="PTHR11993:SF10">
    <property type="entry name" value="NADH DEHYDROGENASE [UBIQUINONE] IRON-SULFUR PROTEIN 2, MITOCHONDRIAL"/>
    <property type="match status" value="1"/>
</dbReference>
<dbReference type="PANTHER" id="PTHR11993">
    <property type="entry name" value="NADH-UBIQUINONE OXIDOREDUCTASE 49 KDA SUBUNIT"/>
    <property type="match status" value="1"/>
</dbReference>
<dbReference type="Pfam" id="PF00346">
    <property type="entry name" value="Complex1_49kDa"/>
    <property type="match status" value="1"/>
</dbReference>
<dbReference type="SUPFAM" id="SSF56762">
    <property type="entry name" value="HydB/Nqo4-like"/>
    <property type="match status" value="1"/>
</dbReference>
<dbReference type="PROSITE" id="PS00535">
    <property type="entry name" value="COMPLEX1_49K"/>
    <property type="match status" value="1"/>
</dbReference>
<comment type="function">
    <text evidence="1">NDH-1 shuttles electrons from an unknown electron donor, via FMN and iron-sulfur (Fe-S) centers, to quinones in the respiratory and/or the photosynthetic chain. The immediate electron acceptor for the enzyme in this species is believed to be plastoquinone. Couples the redox reaction to proton translocation, and thus conserves the redox energy in a proton gradient. Cyanobacterial NDH-1 also plays a role in inorganic carbon-concentration.</text>
</comment>
<comment type="catalytic activity">
    <reaction evidence="1">
        <text>a plastoquinone + NADH + (n+1) H(+)(in) = a plastoquinol + NAD(+) + n H(+)(out)</text>
        <dbReference type="Rhea" id="RHEA:42608"/>
        <dbReference type="Rhea" id="RHEA-COMP:9561"/>
        <dbReference type="Rhea" id="RHEA-COMP:9562"/>
        <dbReference type="ChEBI" id="CHEBI:15378"/>
        <dbReference type="ChEBI" id="CHEBI:17757"/>
        <dbReference type="ChEBI" id="CHEBI:57540"/>
        <dbReference type="ChEBI" id="CHEBI:57945"/>
        <dbReference type="ChEBI" id="CHEBI:62192"/>
    </reaction>
</comment>
<comment type="catalytic activity">
    <reaction evidence="1">
        <text>a plastoquinone + NADPH + (n+1) H(+)(in) = a plastoquinol + NADP(+) + n H(+)(out)</text>
        <dbReference type="Rhea" id="RHEA:42612"/>
        <dbReference type="Rhea" id="RHEA-COMP:9561"/>
        <dbReference type="Rhea" id="RHEA-COMP:9562"/>
        <dbReference type="ChEBI" id="CHEBI:15378"/>
        <dbReference type="ChEBI" id="CHEBI:17757"/>
        <dbReference type="ChEBI" id="CHEBI:57783"/>
        <dbReference type="ChEBI" id="CHEBI:58349"/>
        <dbReference type="ChEBI" id="CHEBI:62192"/>
    </reaction>
</comment>
<comment type="subunit">
    <text evidence="1">NDH-1 can be composed of about 15 different subunits; different subcomplexes with different compositions have been identified which probably have different functions.</text>
</comment>
<comment type="subcellular location">
    <subcellularLocation>
        <location evidence="1">Cellular thylakoid membrane</location>
        <topology evidence="1">Peripheral membrane protein</topology>
        <orientation evidence="1">Cytoplasmic side</orientation>
    </subcellularLocation>
</comment>
<comment type="similarity">
    <text evidence="1">Belongs to the complex I 49 kDa subunit family.</text>
</comment>
<protein>
    <recommendedName>
        <fullName evidence="1">NAD(P)H-quinone oxidoreductase subunit H</fullName>
        <ecNumber evidence="1">7.1.1.-</ecNumber>
    </recommendedName>
    <alternativeName>
        <fullName>NAD(P)H dehydrogenase subunit H</fullName>
    </alternativeName>
    <alternativeName>
        <fullName evidence="1">NADH-plastoquinone oxidoreductase subunit H</fullName>
    </alternativeName>
    <alternativeName>
        <fullName evidence="1">NDH-1 subunit H</fullName>
        <shortName evidence="1">NDH-H</shortName>
    </alternativeName>
</protein>
<keyword id="KW-0472">Membrane</keyword>
<keyword id="KW-0520">NAD</keyword>
<keyword id="KW-0521">NADP</keyword>
<keyword id="KW-0618">Plastoquinone</keyword>
<keyword id="KW-0874">Quinone</keyword>
<keyword id="KW-0793">Thylakoid</keyword>
<keyword id="KW-1278">Translocase</keyword>
<keyword id="KW-0813">Transport</keyword>
<organism>
    <name type="scientific">Prochlorococcus marinus (strain NATL1A)</name>
    <dbReference type="NCBI Taxonomy" id="167555"/>
    <lineage>
        <taxon>Bacteria</taxon>
        <taxon>Bacillati</taxon>
        <taxon>Cyanobacteriota</taxon>
        <taxon>Cyanophyceae</taxon>
        <taxon>Synechococcales</taxon>
        <taxon>Prochlorococcaceae</taxon>
        <taxon>Prochlorococcus</taxon>
    </lineage>
</organism>
<evidence type="ECO:0000255" key="1">
    <source>
        <dbReference type="HAMAP-Rule" id="MF_01358"/>
    </source>
</evidence>
<sequence>MAQLETRTEPMVVNFGPHHPSMHGVLRLVVTLDGEDVVDCEPVIGYLHRGMEKIAENRTNVMFVPYVSRMDYAAGMFYEAIVVNAPERLANIKVPKRASYIRAIMLELNRIANHLLWLGPFLADVGAQTPFFYIFREREMIYDLWEAATGQRLINNNYFRIGGVACDLPWGWLEKCKDFCDWFGPKIDEYEKLITNNPIFRRRIEGLGVIGKEQAINWSLSGPMLRAAGVPWDLRKVDHYECYDDFEWDIAWEKEGDCYARYRVRIEEMRQSLKILRQACEMIPGGPTENLEAQRTVEGKKGDLSGFDYQYVAKKVAPTFKIPNGELYTRLESGKGEIGVFIQGNNDVTPWRFKIRAADSNNLQILPHILKGAKVADIMAILGSIDVIMGSVDR</sequence>